<comment type="function">
    <text evidence="1">GTPase that plays an essential role in the late steps of ribosome biogenesis.</text>
</comment>
<comment type="subunit">
    <text evidence="1">Associates with the 50S ribosomal subunit.</text>
</comment>
<comment type="similarity">
    <text evidence="1">Belongs to the TRAFAC class TrmE-Era-EngA-EngB-Septin-like GTPase superfamily. EngA (Der) GTPase family.</text>
</comment>
<keyword id="KW-0342">GTP-binding</keyword>
<keyword id="KW-0547">Nucleotide-binding</keyword>
<keyword id="KW-1185">Reference proteome</keyword>
<keyword id="KW-0677">Repeat</keyword>
<keyword id="KW-0690">Ribosome biogenesis</keyword>
<reference key="1">
    <citation type="journal article" date="2006" name="Proc. Natl. Acad. Sci. U.S.A.">
        <title>Genome sequence of Synechococcus CC9311: insights into adaptation to a coastal environment.</title>
        <authorList>
            <person name="Palenik B."/>
            <person name="Ren Q."/>
            <person name="Dupont C.L."/>
            <person name="Myers G.S."/>
            <person name="Heidelberg J.F."/>
            <person name="Badger J.H."/>
            <person name="Madupu R."/>
            <person name="Nelson W.C."/>
            <person name="Brinkac L.M."/>
            <person name="Dodson R.J."/>
            <person name="Durkin A.S."/>
            <person name="Daugherty S.C."/>
            <person name="Sullivan S.A."/>
            <person name="Khouri H."/>
            <person name="Mohamoud Y."/>
            <person name="Halpin R."/>
            <person name="Paulsen I.T."/>
        </authorList>
    </citation>
    <scope>NUCLEOTIDE SEQUENCE [LARGE SCALE GENOMIC DNA]</scope>
    <source>
        <strain>CC9311</strain>
    </source>
</reference>
<gene>
    <name evidence="1" type="primary">der</name>
    <name type="synonym">engA</name>
    <name type="ordered locus">sync_0596</name>
</gene>
<dbReference type="EMBL" id="CP000435">
    <property type="protein sequence ID" value="ABI46603.1"/>
    <property type="molecule type" value="Genomic_DNA"/>
</dbReference>
<dbReference type="RefSeq" id="WP_011618541.1">
    <property type="nucleotide sequence ID" value="NC_008319.1"/>
</dbReference>
<dbReference type="SMR" id="Q0ICK8"/>
<dbReference type="STRING" id="64471.sync_0596"/>
<dbReference type="KEGG" id="syg:sync_0596"/>
<dbReference type="eggNOG" id="COG1160">
    <property type="taxonomic scope" value="Bacteria"/>
</dbReference>
<dbReference type="HOGENOM" id="CLU_016077_6_2_3"/>
<dbReference type="OrthoDB" id="9805918at2"/>
<dbReference type="Proteomes" id="UP000001961">
    <property type="component" value="Chromosome"/>
</dbReference>
<dbReference type="GO" id="GO:0005525">
    <property type="term" value="F:GTP binding"/>
    <property type="evidence" value="ECO:0007669"/>
    <property type="project" value="UniProtKB-UniRule"/>
</dbReference>
<dbReference type="GO" id="GO:0043022">
    <property type="term" value="F:ribosome binding"/>
    <property type="evidence" value="ECO:0007669"/>
    <property type="project" value="TreeGrafter"/>
</dbReference>
<dbReference type="GO" id="GO:0042254">
    <property type="term" value="P:ribosome biogenesis"/>
    <property type="evidence" value="ECO:0007669"/>
    <property type="project" value="UniProtKB-KW"/>
</dbReference>
<dbReference type="CDD" id="cd01894">
    <property type="entry name" value="EngA1"/>
    <property type="match status" value="1"/>
</dbReference>
<dbReference type="CDD" id="cd01895">
    <property type="entry name" value="EngA2"/>
    <property type="match status" value="1"/>
</dbReference>
<dbReference type="FunFam" id="3.30.300.20:FF:000004">
    <property type="entry name" value="GTPase Der"/>
    <property type="match status" value="1"/>
</dbReference>
<dbReference type="FunFam" id="3.40.50.300:FF:000040">
    <property type="entry name" value="GTPase Der"/>
    <property type="match status" value="1"/>
</dbReference>
<dbReference type="FunFam" id="3.40.50.300:FF:001185">
    <property type="entry name" value="GTPase Der"/>
    <property type="match status" value="1"/>
</dbReference>
<dbReference type="Gene3D" id="3.30.300.20">
    <property type="match status" value="1"/>
</dbReference>
<dbReference type="Gene3D" id="3.40.50.300">
    <property type="entry name" value="P-loop containing nucleotide triphosphate hydrolases"/>
    <property type="match status" value="2"/>
</dbReference>
<dbReference type="HAMAP" id="MF_00195">
    <property type="entry name" value="GTPase_Der"/>
    <property type="match status" value="1"/>
</dbReference>
<dbReference type="InterPro" id="IPR031166">
    <property type="entry name" value="G_ENGA"/>
</dbReference>
<dbReference type="InterPro" id="IPR006073">
    <property type="entry name" value="GTP-bd"/>
</dbReference>
<dbReference type="InterPro" id="IPR016484">
    <property type="entry name" value="GTPase_Der"/>
</dbReference>
<dbReference type="InterPro" id="IPR032859">
    <property type="entry name" value="KH_dom-like"/>
</dbReference>
<dbReference type="InterPro" id="IPR015946">
    <property type="entry name" value="KH_dom-like_a/b"/>
</dbReference>
<dbReference type="InterPro" id="IPR027417">
    <property type="entry name" value="P-loop_NTPase"/>
</dbReference>
<dbReference type="InterPro" id="IPR005225">
    <property type="entry name" value="Small_GTP-bd"/>
</dbReference>
<dbReference type="NCBIfam" id="TIGR03594">
    <property type="entry name" value="GTPase_EngA"/>
    <property type="match status" value="1"/>
</dbReference>
<dbReference type="NCBIfam" id="TIGR00231">
    <property type="entry name" value="small_GTP"/>
    <property type="match status" value="2"/>
</dbReference>
<dbReference type="PANTHER" id="PTHR43834">
    <property type="entry name" value="GTPASE DER"/>
    <property type="match status" value="1"/>
</dbReference>
<dbReference type="PANTHER" id="PTHR43834:SF6">
    <property type="entry name" value="GTPASE DER"/>
    <property type="match status" value="1"/>
</dbReference>
<dbReference type="Pfam" id="PF14714">
    <property type="entry name" value="KH_dom-like"/>
    <property type="match status" value="1"/>
</dbReference>
<dbReference type="Pfam" id="PF01926">
    <property type="entry name" value="MMR_HSR1"/>
    <property type="match status" value="2"/>
</dbReference>
<dbReference type="PIRSF" id="PIRSF006485">
    <property type="entry name" value="GTP-binding_EngA"/>
    <property type="match status" value="1"/>
</dbReference>
<dbReference type="PRINTS" id="PR00449">
    <property type="entry name" value="RASTRNSFRMNG"/>
</dbReference>
<dbReference type="SUPFAM" id="SSF52540">
    <property type="entry name" value="P-loop containing nucleoside triphosphate hydrolases"/>
    <property type="match status" value="2"/>
</dbReference>
<dbReference type="PROSITE" id="PS51712">
    <property type="entry name" value="G_ENGA"/>
    <property type="match status" value="2"/>
</dbReference>
<proteinExistence type="inferred from homology"/>
<feature type="chain" id="PRO_1000011771" description="GTPase Der">
    <location>
        <begin position="1"/>
        <end position="455"/>
    </location>
</feature>
<feature type="domain" description="EngA-type G 1">
    <location>
        <begin position="4"/>
        <end position="169"/>
    </location>
</feature>
<feature type="domain" description="EngA-type G 2">
    <location>
        <begin position="178"/>
        <end position="353"/>
    </location>
</feature>
<feature type="domain" description="KH-like" evidence="1">
    <location>
        <begin position="354"/>
        <end position="439"/>
    </location>
</feature>
<feature type="binding site" evidence="1">
    <location>
        <begin position="10"/>
        <end position="17"/>
    </location>
    <ligand>
        <name>GTP</name>
        <dbReference type="ChEBI" id="CHEBI:37565"/>
        <label>1</label>
    </ligand>
</feature>
<feature type="binding site" evidence="1">
    <location>
        <begin position="57"/>
        <end position="61"/>
    </location>
    <ligand>
        <name>GTP</name>
        <dbReference type="ChEBI" id="CHEBI:37565"/>
        <label>1</label>
    </ligand>
</feature>
<feature type="binding site" evidence="1">
    <location>
        <begin position="120"/>
        <end position="123"/>
    </location>
    <ligand>
        <name>GTP</name>
        <dbReference type="ChEBI" id="CHEBI:37565"/>
        <label>1</label>
    </ligand>
</feature>
<feature type="binding site" evidence="1">
    <location>
        <begin position="184"/>
        <end position="191"/>
    </location>
    <ligand>
        <name>GTP</name>
        <dbReference type="ChEBI" id="CHEBI:37565"/>
        <label>2</label>
    </ligand>
</feature>
<feature type="binding site" evidence="1">
    <location>
        <begin position="231"/>
        <end position="235"/>
    </location>
    <ligand>
        <name>GTP</name>
        <dbReference type="ChEBI" id="CHEBI:37565"/>
        <label>2</label>
    </ligand>
</feature>
<feature type="binding site" evidence="1">
    <location>
        <begin position="296"/>
        <end position="299"/>
    </location>
    <ligand>
        <name>GTP</name>
        <dbReference type="ChEBI" id="CHEBI:37565"/>
        <label>2</label>
    </ligand>
</feature>
<sequence length="455" mass="51082">MARPVVAIIGRPNVGKSTLVNRLCRSREAIVHDQPGVTRDRTYQDGYWGDREFKVVDTGGLVFDDDSEFLPEIREQASLALAEASVALVIVDGQQGLTAADESIAEWLRTQNCKTLLAVNKCESPEQGLGMAAEFWRLGLGEPHPISAIHGAGTAELLDQVLTFLPPKDEESDEEEPIQLSIIGRPNVGKSSLLNSICGETRAIVSPIRGTTRDTIDTRIERENRRWRLIDTAGIRRRRSVNYGPEFFGINRSFKAIERSDVCVLVIDALDGVTEQDQRLAGRIEEDGRACVVVVNKWDAVEKDSHTMTAMEKELRAKLYFLDWAPMLFTSALTGQRVDSIFALAALAVEQHRRRVSTSVVNEVLKEALSWRSPPTTRGGRQGRLYYGTQVASRPPSFTLFVNEPKLFGDTYRRYVERQIREGLGFDGTPVKLFWRGKQQRDAEKELVRQQNRQG</sequence>
<name>DER_SYNS3</name>
<evidence type="ECO:0000255" key="1">
    <source>
        <dbReference type="HAMAP-Rule" id="MF_00195"/>
    </source>
</evidence>
<accession>Q0ICK8</accession>
<organism>
    <name type="scientific">Synechococcus sp. (strain CC9311)</name>
    <dbReference type="NCBI Taxonomy" id="64471"/>
    <lineage>
        <taxon>Bacteria</taxon>
        <taxon>Bacillati</taxon>
        <taxon>Cyanobacteriota</taxon>
        <taxon>Cyanophyceae</taxon>
        <taxon>Synechococcales</taxon>
        <taxon>Synechococcaceae</taxon>
        <taxon>Synechococcus</taxon>
    </lineage>
</organism>
<protein>
    <recommendedName>
        <fullName evidence="1">GTPase Der</fullName>
    </recommendedName>
    <alternativeName>
        <fullName evidence="1">GTP-binding protein EngA</fullName>
    </alternativeName>
</protein>